<protein>
    <recommendedName>
        <fullName evidence="1">Large ribosomal subunit protein bL17</fullName>
    </recommendedName>
    <alternativeName>
        <fullName evidence="2">50S ribosomal protein L17</fullName>
    </alternativeName>
</protein>
<reference key="1">
    <citation type="journal article" date="2001" name="Lancet">
        <title>Whole genome sequencing of meticillin-resistant Staphylococcus aureus.</title>
        <authorList>
            <person name="Kuroda M."/>
            <person name="Ohta T."/>
            <person name="Uchiyama I."/>
            <person name="Baba T."/>
            <person name="Yuzawa H."/>
            <person name="Kobayashi I."/>
            <person name="Cui L."/>
            <person name="Oguchi A."/>
            <person name="Aoki K."/>
            <person name="Nagai Y."/>
            <person name="Lian J.-Q."/>
            <person name="Ito T."/>
            <person name="Kanamori M."/>
            <person name="Matsumaru H."/>
            <person name="Maruyama A."/>
            <person name="Murakami H."/>
            <person name="Hosoyama A."/>
            <person name="Mizutani-Ui Y."/>
            <person name="Takahashi N.K."/>
            <person name="Sawano T."/>
            <person name="Inoue R."/>
            <person name="Kaito C."/>
            <person name="Sekimizu K."/>
            <person name="Hirakawa H."/>
            <person name="Kuhara S."/>
            <person name="Goto S."/>
            <person name="Yabuzaki J."/>
            <person name="Kanehisa M."/>
            <person name="Yamashita A."/>
            <person name="Oshima K."/>
            <person name="Furuya K."/>
            <person name="Yoshino C."/>
            <person name="Shiba T."/>
            <person name="Hattori M."/>
            <person name="Ogasawara N."/>
            <person name="Hayashi H."/>
            <person name="Hiramatsu K."/>
        </authorList>
    </citation>
    <scope>NUCLEOTIDE SEQUENCE [LARGE SCALE GENOMIC DNA]</scope>
    <source>
        <strain>N315</strain>
    </source>
</reference>
<reference key="2">
    <citation type="submission" date="2007-10" db="UniProtKB">
        <title>Shotgun proteomic analysis of total and membrane protein extracts of S. aureus strain N315.</title>
        <authorList>
            <person name="Vaezzadeh A.R."/>
            <person name="Deshusses J."/>
            <person name="Lescuyer P."/>
            <person name="Hochstrasser D.F."/>
        </authorList>
    </citation>
    <scope>IDENTIFICATION BY MASS SPECTROMETRY [LARGE SCALE ANALYSIS]</scope>
    <source>
        <strain>N315</strain>
    </source>
</reference>
<keyword id="KW-0687">Ribonucleoprotein</keyword>
<keyword id="KW-0689">Ribosomal protein</keyword>
<organism>
    <name type="scientific">Staphylococcus aureus (strain N315)</name>
    <dbReference type="NCBI Taxonomy" id="158879"/>
    <lineage>
        <taxon>Bacteria</taxon>
        <taxon>Bacillati</taxon>
        <taxon>Bacillota</taxon>
        <taxon>Bacilli</taxon>
        <taxon>Bacillales</taxon>
        <taxon>Staphylococcaceae</taxon>
        <taxon>Staphylococcus</taxon>
    </lineage>
</organism>
<evidence type="ECO:0000255" key="1">
    <source>
        <dbReference type="HAMAP-Rule" id="MF_01368"/>
    </source>
</evidence>
<evidence type="ECO:0000305" key="2"/>
<comment type="subunit">
    <text evidence="1">Part of the 50S ribosomal subunit. Contacts protein L32.</text>
</comment>
<comment type="similarity">
    <text evidence="1">Belongs to the bacterial ribosomal protein bL17 family.</text>
</comment>
<gene>
    <name evidence="1" type="primary">rplQ</name>
    <name type="ordered locus">SA2022</name>
</gene>
<proteinExistence type="evidence at protein level"/>
<name>RL17_STAAN</name>
<feature type="chain" id="PRO_0000224139" description="Large ribosomal subunit protein bL17">
    <location>
        <begin position="1"/>
        <end position="122"/>
    </location>
</feature>
<accession>Q7A469</accession>
<dbReference type="EMBL" id="BA000018">
    <property type="protein sequence ID" value="BAB43315.1"/>
    <property type="molecule type" value="Genomic_DNA"/>
</dbReference>
<dbReference type="PIR" id="B90019">
    <property type="entry name" value="B90019"/>
</dbReference>
<dbReference type="RefSeq" id="WP_000542274.1">
    <property type="nucleotide sequence ID" value="NC_002745.2"/>
</dbReference>
<dbReference type="SMR" id="Q7A469"/>
<dbReference type="EnsemblBacteria" id="BAB43315">
    <property type="protein sequence ID" value="BAB43315"/>
    <property type="gene ID" value="BAB43315"/>
</dbReference>
<dbReference type="GeneID" id="98346535"/>
<dbReference type="KEGG" id="sau:SA2022"/>
<dbReference type="HOGENOM" id="CLU_074407_2_2_9"/>
<dbReference type="GO" id="GO:0022625">
    <property type="term" value="C:cytosolic large ribosomal subunit"/>
    <property type="evidence" value="ECO:0007669"/>
    <property type="project" value="TreeGrafter"/>
</dbReference>
<dbReference type="GO" id="GO:0003735">
    <property type="term" value="F:structural constituent of ribosome"/>
    <property type="evidence" value="ECO:0007669"/>
    <property type="project" value="InterPro"/>
</dbReference>
<dbReference type="GO" id="GO:0006412">
    <property type="term" value="P:translation"/>
    <property type="evidence" value="ECO:0007669"/>
    <property type="project" value="UniProtKB-UniRule"/>
</dbReference>
<dbReference type="FunFam" id="3.90.1030.10:FF:000002">
    <property type="entry name" value="50S ribosomal protein L17"/>
    <property type="match status" value="1"/>
</dbReference>
<dbReference type="Gene3D" id="3.90.1030.10">
    <property type="entry name" value="Ribosomal protein L17"/>
    <property type="match status" value="1"/>
</dbReference>
<dbReference type="HAMAP" id="MF_01368">
    <property type="entry name" value="Ribosomal_bL17"/>
    <property type="match status" value="1"/>
</dbReference>
<dbReference type="InterPro" id="IPR000456">
    <property type="entry name" value="Ribosomal_bL17"/>
</dbReference>
<dbReference type="InterPro" id="IPR047859">
    <property type="entry name" value="Ribosomal_bL17_CS"/>
</dbReference>
<dbReference type="InterPro" id="IPR036373">
    <property type="entry name" value="Ribosomal_bL17_sf"/>
</dbReference>
<dbReference type="NCBIfam" id="TIGR00059">
    <property type="entry name" value="L17"/>
    <property type="match status" value="1"/>
</dbReference>
<dbReference type="PANTHER" id="PTHR14413:SF16">
    <property type="entry name" value="LARGE RIBOSOMAL SUBUNIT PROTEIN BL17M"/>
    <property type="match status" value="1"/>
</dbReference>
<dbReference type="PANTHER" id="PTHR14413">
    <property type="entry name" value="RIBOSOMAL PROTEIN L17"/>
    <property type="match status" value="1"/>
</dbReference>
<dbReference type="Pfam" id="PF01196">
    <property type="entry name" value="Ribosomal_L17"/>
    <property type="match status" value="1"/>
</dbReference>
<dbReference type="SUPFAM" id="SSF64263">
    <property type="entry name" value="Prokaryotic ribosomal protein L17"/>
    <property type="match status" value="1"/>
</dbReference>
<dbReference type="PROSITE" id="PS01167">
    <property type="entry name" value="RIBOSOMAL_L17"/>
    <property type="match status" value="1"/>
</dbReference>
<sequence>MGYRKLGRTSDQRKAMLRDLATSLIISERIETTEARAKEVRSVVEKLITLGKKGDLASRRNAAKTLRNVEILNEDETTQTALQKLFGEIAERYTERQGGYTRILKQGPRRGDGAESVIIELV</sequence>